<name>TYSY_BACAH</name>
<sequence length="318" mass="36893">MKHAENEYLNLCRHVMEHGTKKEDRTGTGTVSVFGYQMRFDLSKGFPLLTTKRVPFRLVASELLWFMKGDTNIRYLLQHNNNIWNEWAFKSWVESDEYTGPDMIDFGLRSQQDEEFKVQYDEQMELFKKNVLEDDEFSNKYGYLGDVYGKQWRAWKTTAGETLDQLKDVIEMIKKTPDSRRLIVSAWNPEDVPSMALPPCHTLFQFYVADGKLSCQLYQRSGDIFLGIPFNIASYSLLTHLIAHECGLEVGEFVHTIGDAHIYTNHFEQVEKQLAREPRPFPKLTLNPDVKSVFDFEMEDLTIEGYDPHPAIKAPVAV</sequence>
<accession>A0RDL9</accession>
<proteinExistence type="inferred from homology"/>
<protein>
    <recommendedName>
        <fullName evidence="1">Thymidylate synthase</fullName>
        <shortName evidence="1">TS</shortName>
        <shortName evidence="1">TSase</shortName>
        <ecNumber evidence="1">2.1.1.45</ecNumber>
    </recommendedName>
</protein>
<feature type="chain" id="PRO_1000000576" description="Thymidylate synthase">
    <location>
        <begin position="1"/>
        <end position="318"/>
    </location>
</feature>
<feature type="active site" description="Nucleophile" evidence="1">
    <location>
        <position position="200"/>
    </location>
</feature>
<feature type="binding site" description="in other chain" evidence="1">
    <location>
        <position position="25"/>
    </location>
    <ligand>
        <name>dUMP</name>
        <dbReference type="ChEBI" id="CHEBI:246422"/>
        <note>ligand shared between dimeric partners</note>
    </ligand>
</feature>
<feature type="binding site" evidence="1">
    <location>
        <begin position="180"/>
        <end position="181"/>
    </location>
    <ligand>
        <name>dUMP</name>
        <dbReference type="ChEBI" id="CHEBI:246422"/>
        <note>ligand shared between dimeric partners</note>
    </ligand>
</feature>
<feature type="binding site" description="in other chain" evidence="1">
    <location>
        <begin position="220"/>
        <end position="223"/>
    </location>
    <ligand>
        <name>dUMP</name>
        <dbReference type="ChEBI" id="CHEBI:246422"/>
        <note>ligand shared between dimeric partners</note>
    </ligand>
</feature>
<feature type="binding site" evidence="1">
    <location>
        <position position="223"/>
    </location>
    <ligand>
        <name>(6R)-5,10-methylene-5,6,7,8-tetrahydrofolate</name>
        <dbReference type="ChEBI" id="CHEBI:15636"/>
    </ligand>
</feature>
<feature type="binding site" description="in other chain" evidence="1">
    <location>
        <position position="231"/>
    </location>
    <ligand>
        <name>dUMP</name>
        <dbReference type="ChEBI" id="CHEBI:246422"/>
        <note>ligand shared between dimeric partners</note>
    </ligand>
</feature>
<feature type="binding site" description="in other chain" evidence="1">
    <location>
        <begin position="261"/>
        <end position="263"/>
    </location>
    <ligand>
        <name>dUMP</name>
        <dbReference type="ChEBI" id="CHEBI:246422"/>
        <note>ligand shared between dimeric partners</note>
    </ligand>
</feature>
<feature type="binding site" evidence="1">
    <location>
        <position position="317"/>
    </location>
    <ligand>
        <name>(6R)-5,10-methylene-5,6,7,8-tetrahydrofolate</name>
        <dbReference type="ChEBI" id="CHEBI:15636"/>
    </ligand>
</feature>
<dbReference type="EC" id="2.1.1.45" evidence="1"/>
<dbReference type="EMBL" id="CP000485">
    <property type="protein sequence ID" value="ABK85312.1"/>
    <property type="molecule type" value="Genomic_DNA"/>
</dbReference>
<dbReference type="RefSeq" id="WP_000679592.1">
    <property type="nucleotide sequence ID" value="NC_008600.1"/>
</dbReference>
<dbReference type="SMR" id="A0RDL9"/>
<dbReference type="KEGG" id="btl:BALH_2000"/>
<dbReference type="HOGENOM" id="CLU_021669_0_2_9"/>
<dbReference type="UniPathway" id="UPA00575"/>
<dbReference type="GO" id="GO:0005829">
    <property type="term" value="C:cytosol"/>
    <property type="evidence" value="ECO:0007669"/>
    <property type="project" value="TreeGrafter"/>
</dbReference>
<dbReference type="GO" id="GO:0004799">
    <property type="term" value="F:thymidylate synthase activity"/>
    <property type="evidence" value="ECO:0007669"/>
    <property type="project" value="UniProtKB-UniRule"/>
</dbReference>
<dbReference type="GO" id="GO:0006231">
    <property type="term" value="P:dTMP biosynthetic process"/>
    <property type="evidence" value="ECO:0007669"/>
    <property type="project" value="UniProtKB-UniRule"/>
</dbReference>
<dbReference type="GO" id="GO:0006235">
    <property type="term" value="P:dTTP biosynthetic process"/>
    <property type="evidence" value="ECO:0007669"/>
    <property type="project" value="UniProtKB-UniRule"/>
</dbReference>
<dbReference type="GO" id="GO:0032259">
    <property type="term" value="P:methylation"/>
    <property type="evidence" value="ECO:0007669"/>
    <property type="project" value="UniProtKB-KW"/>
</dbReference>
<dbReference type="CDD" id="cd00351">
    <property type="entry name" value="TS_Pyrimidine_HMase"/>
    <property type="match status" value="1"/>
</dbReference>
<dbReference type="Gene3D" id="3.30.572.10">
    <property type="entry name" value="Thymidylate synthase/dCMP hydroxymethylase domain"/>
    <property type="match status" value="1"/>
</dbReference>
<dbReference type="HAMAP" id="MF_00008">
    <property type="entry name" value="Thymidy_synth_bact"/>
    <property type="match status" value="1"/>
</dbReference>
<dbReference type="InterPro" id="IPR045097">
    <property type="entry name" value="Thymidate_synth/dCMP_Mease"/>
</dbReference>
<dbReference type="InterPro" id="IPR023451">
    <property type="entry name" value="Thymidate_synth/dCMP_Mease_dom"/>
</dbReference>
<dbReference type="InterPro" id="IPR036926">
    <property type="entry name" value="Thymidate_synth/dCMP_Mease_sf"/>
</dbReference>
<dbReference type="InterPro" id="IPR000398">
    <property type="entry name" value="Thymidylate_synthase"/>
</dbReference>
<dbReference type="InterPro" id="IPR020940">
    <property type="entry name" value="Thymidylate_synthase_AS"/>
</dbReference>
<dbReference type="NCBIfam" id="NF002496">
    <property type="entry name" value="PRK01827.1-2"/>
    <property type="match status" value="1"/>
</dbReference>
<dbReference type="NCBIfam" id="TIGR03284">
    <property type="entry name" value="thym_sym"/>
    <property type="match status" value="1"/>
</dbReference>
<dbReference type="PANTHER" id="PTHR11548:SF9">
    <property type="entry name" value="THYMIDYLATE SYNTHASE"/>
    <property type="match status" value="1"/>
</dbReference>
<dbReference type="PANTHER" id="PTHR11548">
    <property type="entry name" value="THYMIDYLATE SYNTHASE 1"/>
    <property type="match status" value="1"/>
</dbReference>
<dbReference type="Pfam" id="PF00303">
    <property type="entry name" value="Thymidylat_synt"/>
    <property type="match status" value="1"/>
</dbReference>
<dbReference type="PRINTS" id="PR00108">
    <property type="entry name" value="THYMDSNTHASE"/>
</dbReference>
<dbReference type="SUPFAM" id="SSF55831">
    <property type="entry name" value="Thymidylate synthase/dCMP hydroxymethylase"/>
    <property type="match status" value="1"/>
</dbReference>
<dbReference type="PROSITE" id="PS00091">
    <property type="entry name" value="THYMIDYLATE_SYNTHASE"/>
    <property type="match status" value="1"/>
</dbReference>
<evidence type="ECO:0000255" key="1">
    <source>
        <dbReference type="HAMAP-Rule" id="MF_00008"/>
    </source>
</evidence>
<organism>
    <name type="scientific">Bacillus thuringiensis (strain Al Hakam)</name>
    <dbReference type="NCBI Taxonomy" id="412694"/>
    <lineage>
        <taxon>Bacteria</taxon>
        <taxon>Bacillati</taxon>
        <taxon>Bacillota</taxon>
        <taxon>Bacilli</taxon>
        <taxon>Bacillales</taxon>
        <taxon>Bacillaceae</taxon>
        <taxon>Bacillus</taxon>
        <taxon>Bacillus cereus group</taxon>
    </lineage>
</organism>
<reference key="1">
    <citation type="journal article" date="2007" name="J. Bacteriol.">
        <title>The complete genome sequence of Bacillus thuringiensis Al Hakam.</title>
        <authorList>
            <person name="Challacombe J.F."/>
            <person name="Altherr M.R."/>
            <person name="Xie G."/>
            <person name="Bhotika S.S."/>
            <person name="Brown N."/>
            <person name="Bruce D."/>
            <person name="Campbell C.S."/>
            <person name="Campbell M.L."/>
            <person name="Chen J."/>
            <person name="Chertkov O."/>
            <person name="Cleland C."/>
            <person name="Dimitrijevic M."/>
            <person name="Doggett N.A."/>
            <person name="Fawcett J.J."/>
            <person name="Glavina T."/>
            <person name="Goodwin L.A."/>
            <person name="Green L.D."/>
            <person name="Han C.S."/>
            <person name="Hill K.K."/>
            <person name="Hitchcock P."/>
            <person name="Jackson P.J."/>
            <person name="Keim P."/>
            <person name="Kewalramani A.R."/>
            <person name="Longmire J."/>
            <person name="Lucas S."/>
            <person name="Malfatti S."/>
            <person name="Martinez D."/>
            <person name="McMurry K."/>
            <person name="Meincke L.J."/>
            <person name="Misra M."/>
            <person name="Moseman B.L."/>
            <person name="Mundt M."/>
            <person name="Munk A.C."/>
            <person name="Okinaka R.T."/>
            <person name="Parson-Quintana B."/>
            <person name="Reilly L.P."/>
            <person name="Richardson P."/>
            <person name="Robinson D.L."/>
            <person name="Saunders E."/>
            <person name="Tapia R."/>
            <person name="Tesmer J.G."/>
            <person name="Thayer N."/>
            <person name="Thompson L.S."/>
            <person name="Tice H."/>
            <person name="Ticknor L.O."/>
            <person name="Wills P.L."/>
            <person name="Gilna P."/>
            <person name="Brettin T.S."/>
        </authorList>
    </citation>
    <scope>NUCLEOTIDE SEQUENCE [LARGE SCALE GENOMIC DNA]</scope>
    <source>
        <strain>Al Hakam</strain>
    </source>
</reference>
<comment type="function">
    <text evidence="1">Catalyzes the reductive methylation of 2'-deoxyuridine-5'-monophosphate (dUMP) to 2'-deoxythymidine-5'-monophosphate (dTMP) while utilizing 5,10-methylenetetrahydrofolate (mTHF) as the methyl donor and reductant in the reaction, yielding dihydrofolate (DHF) as a by-product. This enzymatic reaction provides an intracellular de novo source of dTMP, an essential precursor for DNA biosynthesis.</text>
</comment>
<comment type="catalytic activity">
    <reaction evidence="1">
        <text>dUMP + (6R)-5,10-methylene-5,6,7,8-tetrahydrofolate = 7,8-dihydrofolate + dTMP</text>
        <dbReference type="Rhea" id="RHEA:12104"/>
        <dbReference type="ChEBI" id="CHEBI:15636"/>
        <dbReference type="ChEBI" id="CHEBI:57451"/>
        <dbReference type="ChEBI" id="CHEBI:63528"/>
        <dbReference type="ChEBI" id="CHEBI:246422"/>
        <dbReference type="EC" id="2.1.1.45"/>
    </reaction>
</comment>
<comment type="pathway">
    <text evidence="1">Pyrimidine metabolism; dTTP biosynthesis.</text>
</comment>
<comment type="subunit">
    <text evidence="1">Homodimer.</text>
</comment>
<comment type="subcellular location">
    <subcellularLocation>
        <location evidence="1">Cytoplasm</location>
    </subcellularLocation>
</comment>
<comment type="similarity">
    <text evidence="1">Belongs to the thymidylate synthase family. Bacterial-type ThyA subfamily.</text>
</comment>
<keyword id="KW-0963">Cytoplasm</keyword>
<keyword id="KW-0489">Methyltransferase</keyword>
<keyword id="KW-0545">Nucleotide biosynthesis</keyword>
<keyword id="KW-0808">Transferase</keyword>
<gene>
    <name evidence="1" type="primary">thyA</name>
    <name type="ordered locus">BALH_2000</name>
</gene>